<feature type="chain" id="PRO_0000262131" description="Phosphatidylserine decarboxylase beta chain" evidence="1">
    <location>
        <begin position="1"/>
        <end position="250"/>
    </location>
</feature>
<feature type="chain" id="PRO_0000262132" description="Phosphatidylserine decarboxylase alpha chain" evidence="1">
    <location>
        <begin position="251"/>
        <end position="284"/>
    </location>
</feature>
<feature type="active site" description="Charge relay system; for autoendoproteolytic cleavage activity" evidence="1">
    <location>
        <position position="88"/>
    </location>
</feature>
<feature type="active site" description="Charge relay system; for autoendoproteolytic cleavage activity" evidence="1">
    <location>
        <position position="145"/>
    </location>
</feature>
<feature type="active site" description="Charge relay system; for autoendoproteolytic cleavage activity" evidence="1">
    <location>
        <position position="251"/>
    </location>
</feature>
<feature type="active site" description="Schiff-base intermediate with substrate; via pyruvic acid; for decarboxylase activity" evidence="1">
    <location>
        <position position="251"/>
    </location>
</feature>
<feature type="site" description="Cleavage (non-hydrolytic); by autocatalysis" evidence="1">
    <location>
        <begin position="250"/>
        <end position="251"/>
    </location>
</feature>
<feature type="modified residue" description="Pyruvic acid (Ser); by autocatalysis" evidence="1">
    <location>
        <position position="251"/>
    </location>
</feature>
<evidence type="ECO:0000255" key="1">
    <source>
        <dbReference type="HAMAP-Rule" id="MF_00662"/>
    </source>
</evidence>
<name>PSD_POLSJ</name>
<accession>Q121P6</accession>
<reference key="1">
    <citation type="journal article" date="2008" name="Appl. Environ. Microbiol.">
        <title>The genome of Polaromonas sp. strain JS666: insights into the evolution of a hydrocarbon- and xenobiotic-degrading bacterium, and features of relevance to biotechnology.</title>
        <authorList>
            <person name="Mattes T.E."/>
            <person name="Alexander A.K."/>
            <person name="Richardson P.M."/>
            <person name="Munk A.C."/>
            <person name="Han C.S."/>
            <person name="Stothard P."/>
            <person name="Coleman N.V."/>
        </authorList>
    </citation>
    <scope>NUCLEOTIDE SEQUENCE [LARGE SCALE GENOMIC DNA]</scope>
    <source>
        <strain>JS666 / ATCC BAA-500</strain>
    </source>
</reference>
<protein>
    <recommendedName>
        <fullName evidence="1">Phosphatidylserine decarboxylase proenzyme</fullName>
        <ecNumber evidence="1">4.1.1.65</ecNumber>
    </recommendedName>
    <component>
        <recommendedName>
            <fullName evidence="1">Phosphatidylserine decarboxylase alpha chain</fullName>
        </recommendedName>
    </component>
    <component>
        <recommendedName>
            <fullName evidence="1">Phosphatidylserine decarboxylase beta chain</fullName>
        </recommendedName>
    </component>
</protein>
<proteinExistence type="inferred from homology"/>
<organism>
    <name type="scientific">Polaromonas sp. (strain JS666 / ATCC BAA-500)</name>
    <dbReference type="NCBI Taxonomy" id="296591"/>
    <lineage>
        <taxon>Bacteria</taxon>
        <taxon>Pseudomonadati</taxon>
        <taxon>Pseudomonadota</taxon>
        <taxon>Betaproteobacteria</taxon>
        <taxon>Burkholderiales</taxon>
        <taxon>Comamonadaceae</taxon>
        <taxon>Polaromonas</taxon>
    </lineage>
</organism>
<dbReference type="EC" id="4.1.1.65" evidence="1"/>
<dbReference type="EMBL" id="CP000316">
    <property type="protein sequence ID" value="ABE46746.1"/>
    <property type="molecule type" value="Genomic_DNA"/>
</dbReference>
<dbReference type="RefSeq" id="WP_011485731.1">
    <property type="nucleotide sequence ID" value="NC_007948.1"/>
</dbReference>
<dbReference type="SMR" id="Q121P6"/>
<dbReference type="STRING" id="296591.Bpro_4870"/>
<dbReference type="KEGG" id="pol:Bpro_4870"/>
<dbReference type="eggNOG" id="COG0688">
    <property type="taxonomic scope" value="Bacteria"/>
</dbReference>
<dbReference type="HOGENOM" id="CLU_029061_4_1_4"/>
<dbReference type="OrthoDB" id="9802030at2"/>
<dbReference type="UniPathway" id="UPA00558">
    <property type="reaction ID" value="UER00616"/>
</dbReference>
<dbReference type="Proteomes" id="UP000001983">
    <property type="component" value="Chromosome"/>
</dbReference>
<dbReference type="GO" id="GO:0005886">
    <property type="term" value="C:plasma membrane"/>
    <property type="evidence" value="ECO:0007669"/>
    <property type="project" value="UniProtKB-SubCell"/>
</dbReference>
<dbReference type="GO" id="GO:0004609">
    <property type="term" value="F:phosphatidylserine decarboxylase activity"/>
    <property type="evidence" value="ECO:0007669"/>
    <property type="project" value="UniProtKB-UniRule"/>
</dbReference>
<dbReference type="GO" id="GO:0006646">
    <property type="term" value="P:phosphatidylethanolamine biosynthetic process"/>
    <property type="evidence" value="ECO:0007669"/>
    <property type="project" value="UniProtKB-UniRule"/>
</dbReference>
<dbReference type="HAMAP" id="MF_00662">
    <property type="entry name" value="PS_decarb_PSD_B_type1"/>
    <property type="match status" value="1"/>
</dbReference>
<dbReference type="InterPro" id="IPR003817">
    <property type="entry name" value="PS_Dcarbxylase"/>
</dbReference>
<dbReference type="InterPro" id="IPR033177">
    <property type="entry name" value="PSD-B"/>
</dbReference>
<dbReference type="InterPro" id="IPR033178">
    <property type="entry name" value="PSD_type1_pro"/>
</dbReference>
<dbReference type="NCBIfam" id="TIGR00163">
    <property type="entry name" value="PS_decarb"/>
    <property type="match status" value="1"/>
</dbReference>
<dbReference type="PANTHER" id="PTHR10067">
    <property type="entry name" value="PHOSPHATIDYLSERINE DECARBOXYLASE"/>
    <property type="match status" value="1"/>
</dbReference>
<dbReference type="PANTHER" id="PTHR10067:SF6">
    <property type="entry name" value="PHOSPHATIDYLSERINE DECARBOXYLASE PROENZYME, MITOCHONDRIAL"/>
    <property type="match status" value="1"/>
</dbReference>
<dbReference type="Pfam" id="PF02666">
    <property type="entry name" value="PS_Dcarbxylase"/>
    <property type="match status" value="1"/>
</dbReference>
<sequence length="284" mass="31309">MSHRFSVLPQYLLPKQALTAFAGFVASRERGWITTEIIRRFVAKYQVNMEEAARSDIASYLTFNDFFTRALKPGVRPLADADLISPVDGAISQFGRIEHDQIFQAKGHHYSTTALVGGDAALAAQFQNGSFATLYLSPKDYHRIHMPCDGRLARMVHVPGELFSVNPVTARGVPGLFARNERVVCVFDSPRGPFVLILVGATIVGSMATVWHGVVNPPRGKQVRAWDYDPNAEAAVVLRRGEEMGRFLLGSTVVMLFPAGPLHFNPDWAPGRLIRLGEAMANYA</sequence>
<gene>
    <name evidence="1" type="primary">psd</name>
    <name type="ordered locus">Bpro_4870</name>
</gene>
<keyword id="KW-1003">Cell membrane</keyword>
<keyword id="KW-0210">Decarboxylase</keyword>
<keyword id="KW-0444">Lipid biosynthesis</keyword>
<keyword id="KW-0443">Lipid metabolism</keyword>
<keyword id="KW-0456">Lyase</keyword>
<keyword id="KW-0472">Membrane</keyword>
<keyword id="KW-0594">Phospholipid biosynthesis</keyword>
<keyword id="KW-1208">Phospholipid metabolism</keyword>
<keyword id="KW-0670">Pyruvate</keyword>
<keyword id="KW-1185">Reference proteome</keyword>
<keyword id="KW-0865">Zymogen</keyword>
<comment type="function">
    <text evidence="1">Catalyzes the formation of phosphatidylethanolamine (PtdEtn) from phosphatidylserine (PtdSer).</text>
</comment>
<comment type="catalytic activity">
    <reaction evidence="1">
        <text>a 1,2-diacyl-sn-glycero-3-phospho-L-serine + H(+) = a 1,2-diacyl-sn-glycero-3-phosphoethanolamine + CO2</text>
        <dbReference type="Rhea" id="RHEA:20828"/>
        <dbReference type="ChEBI" id="CHEBI:15378"/>
        <dbReference type="ChEBI" id="CHEBI:16526"/>
        <dbReference type="ChEBI" id="CHEBI:57262"/>
        <dbReference type="ChEBI" id="CHEBI:64612"/>
        <dbReference type="EC" id="4.1.1.65"/>
    </reaction>
</comment>
<comment type="cofactor">
    <cofactor evidence="1">
        <name>pyruvate</name>
        <dbReference type="ChEBI" id="CHEBI:15361"/>
    </cofactor>
    <text evidence="1">Binds 1 pyruvoyl group covalently per subunit.</text>
</comment>
<comment type="pathway">
    <text evidence="1">Phospholipid metabolism; phosphatidylethanolamine biosynthesis; phosphatidylethanolamine from CDP-diacylglycerol: step 2/2.</text>
</comment>
<comment type="subunit">
    <text evidence="1">Heterodimer of a large membrane-associated beta subunit and a small pyruvoyl-containing alpha subunit.</text>
</comment>
<comment type="subcellular location">
    <subcellularLocation>
        <location evidence="1">Cell membrane</location>
        <topology evidence="1">Peripheral membrane protein</topology>
    </subcellularLocation>
</comment>
<comment type="PTM">
    <text evidence="1">Is synthesized initially as an inactive proenzyme. Formation of the active enzyme involves a self-maturation process in which the active site pyruvoyl group is generated from an internal serine residue via an autocatalytic post-translational modification. Two non-identical subunits are generated from the proenzyme in this reaction, and the pyruvate is formed at the N-terminus of the alpha chain, which is derived from the carboxyl end of the proenzyme. The autoendoproteolytic cleavage occurs by a canonical serine protease mechanism, in which the side chain hydroxyl group of the serine supplies its oxygen atom to form the C-terminus of the beta chain, while the remainder of the serine residue undergoes an oxidative deamination to produce ammonia and the pyruvoyl prosthetic group on the alpha chain. During this reaction, the Ser that is part of the protease active site of the proenzyme becomes the pyruvoyl prosthetic group, which constitutes an essential element of the active site of the mature decarboxylase.</text>
</comment>
<comment type="similarity">
    <text evidence="1">Belongs to the phosphatidylserine decarboxylase family. PSD-B subfamily. Prokaryotic type I sub-subfamily.</text>
</comment>